<comment type="function">
    <text evidence="1">Sequence-specific endonuclease that cleaves unmethylated GATC sequences. It is involved in DNA mismatch repair.</text>
</comment>
<comment type="subcellular location">
    <subcellularLocation>
        <location evidence="1">Cytoplasm</location>
    </subcellularLocation>
</comment>
<comment type="similarity">
    <text evidence="1">Belongs to the MutH family.</text>
</comment>
<proteinExistence type="inferred from homology"/>
<gene>
    <name evidence="1" type="primary">mutH</name>
    <name type="ordered locus">KPK_0874</name>
</gene>
<feature type="chain" id="PRO_1000133468" description="DNA mismatch repair protein MutH">
    <location>
        <begin position="1"/>
        <end position="231"/>
    </location>
</feature>
<organism>
    <name type="scientific">Klebsiella pneumoniae (strain 342)</name>
    <dbReference type="NCBI Taxonomy" id="507522"/>
    <lineage>
        <taxon>Bacteria</taxon>
        <taxon>Pseudomonadati</taxon>
        <taxon>Pseudomonadota</taxon>
        <taxon>Gammaproteobacteria</taxon>
        <taxon>Enterobacterales</taxon>
        <taxon>Enterobacteriaceae</taxon>
        <taxon>Klebsiella/Raoultella group</taxon>
        <taxon>Klebsiella</taxon>
        <taxon>Klebsiella pneumoniae complex</taxon>
    </lineage>
</organism>
<evidence type="ECO:0000255" key="1">
    <source>
        <dbReference type="HAMAP-Rule" id="MF_00759"/>
    </source>
</evidence>
<keyword id="KW-0963">Cytoplasm</keyword>
<keyword id="KW-0227">DNA damage</keyword>
<keyword id="KW-0234">DNA repair</keyword>
<keyword id="KW-0255">Endonuclease</keyword>
<keyword id="KW-0378">Hydrolase</keyword>
<keyword id="KW-0540">Nuclease</keyword>
<sequence length="231" mass="25493">MPTIAPLSSPPQSQEQLLAQARQLAGYSLGELAALAGIPIPRDLKRDKGWTGILLELWLGASAGSKPEQDFAALGVELKTIPIDSRGRPLETTFVCVAPLTGNSGVTWESSHVRHKLQRVLWIPVEGERTIPLAARRVGAPLLWSPDEDEERQLRMDWEELMDLIVLGEVERITARHGEVLQLRPKAANSKALTEAIGAHGETILTLPRGFYLKKNFTAALLARHFLLQHD</sequence>
<protein>
    <recommendedName>
        <fullName evidence="1">DNA mismatch repair protein MutH</fullName>
    </recommendedName>
    <alternativeName>
        <fullName evidence="1">Methyl-directed mismatch repair protein</fullName>
    </alternativeName>
</protein>
<name>MUTH_KLEP3</name>
<dbReference type="EMBL" id="CP000964">
    <property type="protein sequence ID" value="ACI07393.1"/>
    <property type="molecule type" value="Genomic_DNA"/>
</dbReference>
<dbReference type="SMR" id="B5XUP7"/>
<dbReference type="KEGG" id="kpe:KPK_0874"/>
<dbReference type="HOGENOM" id="CLU_086669_0_0_6"/>
<dbReference type="Proteomes" id="UP000001734">
    <property type="component" value="Chromosome"/>
</dbReference>
<dbReference type="GO" id="GO:0005737">
    <property type="term" value="C:cytoplasm"/>
    <property type="evidence" value="ECO:0007669"/>
    <property type="project" value="UniProtKB-SubCell"/>
</dbReference>
<dbReference type="GO" id="GO:0003677">
    <property type="term" value="F:DNA binding"/>
    <property type="evidence" value="ECO:0007669"/>
    <property type="project" value="InterPro"/>
</dbReference>
<dbReference type="GO" id="GO:0004519">
    <property type="term" value="F:endonuclease activity"/>
    <property type="evidence" value="ECO:0007669"/>
    <property type="project" value="UniProtKB-UniRule"/>
</dbReference>
<dbReference type="GO" id="GO:0006304">
    <property type="term" value="P:DNA modification"/>
    <property type="evidence" value="ECO:0007669"/>
    <property type="project" value="InterPro"/>
</dbReference>
<dbReference type="GO" id="GO:0006298">
    <property type="term" value="P:mismatch repair"/>
    <property type="evidence" value="ECO:0007669"/>
    <property type="project" value="UniProtKB-UniRule"/>
</dbReference>
<dbReference type="CDD" id="cd00583">
    <property type="entry name" value="MutH-like"/>
    <property type="match status" value="1"/>
</dbReference>
<dbReference type="FunFam" id="3.40.600.10:FF:000001">
    <property type="entry name" value="DNA mismatch repair protein MutH"/>
    <property type="match status" value="1"/>
</dbReference>
<dbReference type="Gene3D" id="3.40.600.10">
    <property type="entry name" value="DNA mismatch repair MutH/Restriction endonuclease, type II"/>
    <property type="match status" value="1"/>
</dbReference>
<dbReference type="HAMAP" id="MF_00759">
    <property type="entry name" value="MutH"/>
    <property type="match status" value="1"/>
</dbReference>
<dbReference type="InterPro" id="IPR004230">
    <property type="entry name" value="DNA_mismatch_repair_MutH"/>
</dbReference>
<dbReference type="InterPro" id="IPR011337">
    <property type="entry name" value="DNA_rep_MutH/RE_typeII_Sau3AI"/>
</dbReference>
<dbReference type="InterPro" id="IPR037057">
    <property type="entry name" value="DNA_rep_MutH/T2_RE_sf"/>
</dbReference>
<dbReference type="InterPro" id="IPR011335">
    <property type="entry name" value="Restrct_endonuc-II-like"/>
</dbReference>
<dbReference type="NCBIfam" id="TIGR02248">
    <property type="entry name" value="mutH_TIGR"/>
    <property type="match status" value="1"/>
</dbReference>
<dbReference type="NCBIfam" id="NF003458">
    <property type="entry name" value="PRK05070.1"/>
    <property type="match status" value="1"/>
</dbReference>
<dbReference type="Pfam" id="PF02976">
    <property type="entry name" value="MutH"/>
    <property type="match status" value="1"/>
</dbReference>
<dbReference type="SMART" id="SM00927">
    <property type="entry name" value="MutH"/>
    <property type="match status" value="1"/>
</dbReference>
<dbReference type="SUPFAM" id="SSF52980">
    <property type="entry name" value="Restriction endonuclease-like"/>
    <property type="match status" value="1"/>
</dbReference>
<reference key="1">
    <citation type="journal article" date="2008" name="PLoS Genet.">
        <title>Complete genome sequence of the N2-fixing broad host range endophyte Klebsiella pneumoniae 342 and virulence predictions verified in mice.</title>
        <authorList>
            <person name="Fouts D.E."/>
            <person name="Tyler H.L."/>
            <person name="DeBoy R.T."/>
            <person name="Daugherty S."/>
            <person name="Ren Q."/>
            <person name="Badger J.H."/>
            <person name="Durkin A.S."/>
            <person name="Huot H."/>
            <person name="Shrivastava S."/>
            <person name="Kothari S."/>
            <person name="Dodson R.J."/>
            <person name="Mohamoud Y."/>
            <person name="Khouri H."/>
            <person name="Roesch L.F.W."/>
            <person name="Krogfelt K.A."/>
            <person name="Struve C."/>
            <person name="Triplett E.W."/>
            <person name="Methe B.A."/>
        </authorList>
    </citation>
    <scope>NUCLEOTIDE SEQUENCE [LARGE SCALE GENOMIC DNA]</scope>
    <source>
        <strain>342</strain>
    </source>
</reference>
<accession>B5XUP7</accession>